<evidence type="ECO:0000250" key="1">
    <source>
        <dbReference type="UniProtKB" id="A0A1D8PQ86"/>
    </source>
</evidence>
<evidence type="ECO:0000255" key="2"/>
<evidence type="ECO:0000255" key="3">
    <source>
        <dbReference type="PROSITE-ProRule" id="PRU00498"/>
    </source>
</evidence>
<evidence type="ECO:0000256" key="4">
    <source>
        <dbReference type="SAM" id="MobiDB-lite"/>
    </source>
</evidence>
<evidence type="ECO:0000269" key="5">
    <source>
    </source>
</evidence>
<evidence type="ECO:0000269" key="6">
    <source>
    </source>
</evidence>
<evidence type="ECO:0000269" key="7">
    <source>
    </source>
</evidence>
<evidence type="ECO:0000269" key="8">
    <source>
    </source>
</evidence>
<evidence type="ECO:0000305" key="9"/>
<sequence>MKKLYLLYLLASFTTVISKEVTGVFNQFNSLIWSYTYRARYEEISTLTAKAQLEWALDGTIASPGDTFTLVMPCVYKFMTYETSVQLTANSIAYATCDFDAGEDTKSFSSLKCTVTDELTEDTSVFGSVILPIAFNVGGSGSKSTITDSKCFSSGYNTVTFFDGNNQLSTTANFLPRRELAFGLVVSQRLSMSLDTMTNFVMSTPCFMGYQSGKLGFTSNDDDFEIDCSSIHVGITNEINDWSMPVSSVPFDHTIRCTSRALYIEFKTIPAGYRPFVDAIVQIPTTEPFFVKYTNEFACVNGIYTSIPFTSFFSQPILYDEALAIGADLVRTTSTVIGSITRTTTLPFISRLQKTKTILVLEPIPTTTVTTSHHGFDTWYYTKKATIGDTATVFIDVPQHTATTLTTYWQESSTATTTYFDDIDLVDTVIVKIPYPNPTIITTQFWSGKYLTTETHKEPPLGTDSVIIKEPHNPTVTTTEFWSESFATTETITNNPEGTDSVIIKEPHNPTVTTTKFWSESFATTETITTGPLGTDSIVIHDPLEESSSSTAIESSDSNISSSAQDSSSSVEQSFTSADETSSIVELSSSSDIPSSSIGLTSSESSTVSSYDSYSSSTSESSIASSYDSYSSSSIESSTLSSSDRYSSSISDTTSFWDSSSSDLESTSITWSSSIDAQSSHLVQSVSNSISTSQEISSSSSEESSTSATDALVSSDASSILSSDTSSYYPSSTISPSDDFPHTIAGESDSQSFSFITSTVEISSDSVSLTSDPASSFDSSSRLNSDSSSSPSTDQRDILTSSSFSTLIKSSESRESSSGTILSEESSDSIPTTFSTRYWSPSGMSSRHYTNSTETSVSDVVSSSVAGDETSESSVSVTSESSESVTSESVASESVTSESVTAVSDISDLYTTSEEVSTSDSNSGMSSPIPSSEQRSSIPIMSSSDESSESRESSIGTILSEESSDSIPTTFSTRYWSPSGMSSRHYTNSTETSVSDVVSSSVAGDETSESSVSVISESSESVTSESVASESVTAVSDISDLYTTSEVVSTSDSKIVPSTSVPSSEQRSSIPIMSSSDESSESRESSSGTILSEENSDSIPTTFSTRYVSVSLTVGELSALPSLPGKLSHLPSSLSETSIGMTKSANLSPQFFSTSVDSALSYWASGSSSADHQSSATCDVSESSVEGNLSAMALGMSNSDDGLSEDTRSSSVAGKEEIELTSTNSVGEITLISYSSSSPTTHDHGRVSKSMGAAPLSSLFSVSVHAPLVTGLSDSDTFPSENSNRSRSFKESTDNTISISRESLGNPYSSISSPSDYDVKSFTTSRELVSSESILPFSDVMDANDMPTSGSNLHSMVFSISVLGEKFNANIEKHKNTNGHYSSMVFTYQSAGLEESDQRIAVTNTKFDQNKIDTTIDSNTFVTSLPFATTLNDQIDQAVPIKIPASSTAGFVSDVLKPDYSKSVQAESVQTDSTTYSEMMSSKRNKNSGFGTSSLNLKPTITVVTKSIDTKVNTMKEGGVSKQVSTTVTEQYDTSTYTPASLLVSDNSGSVSKYSLWMMAFYMLFGLF</sequence>
<feature type="signal peptide" evidence="2">
    <location>
        <begin position="1"/>
        <end position="18"/>
    </location>
</feature>
<feature type="chain" id="PRO_0000420226" description="Agglutinin-like protein 7">
    <location>
        <begin position="19"/>
        <end position="1548"/>
    </location>
</feature>
<feature type="propeptide" id="PRO_0000420227" description="Removed in mature form" evidence="2">
    <location>
        <begin position="1549"/>
        <end position="1568"/>
    </location>
</feature>
<feature type="repeat" description="ALS 1">
    <location>
        <begin position="403"/>
        <end position="434"/>
    </location>
</feature>
<feature type="repeat" description="ALS 2">
    <location>
        <begin position="441"/>
        <end position="471"/>
    </location>
</feature>
<feature type="repeat" description="ALS 3">
    <location>
        <begin position="476"/>
        <end position="507"/>
    </location>
</feature>
<feature type="repeat" description="ALS 4">
    <location>
        <begin position="512"/>
        <end position="543"/>
    </location>
</feature>
<feature type="region of interest" description="Disordered" evidence="4">
    <location>
        <begin position="546"/>
        <end position="662"/>
    </location>
</feature>
<feature type="region of interest" description="Disordered" evidence="4">
    <location>
        <begin position="721"/>
        <end position="743"/>
    </location>
</feature>
<feature type="region of interest" description="Disordered" evidence="4">
    <location>
        <begin position="767"/>
        <end position="832"/>
    </location>
</feature>
<feature type="region of interest" description="Disordered" evidence="4">
    <location>
        <begin position="860"/>
        <end position="1030"/>
    </location>
</feature>
<feature type="region of interest" description="Disordered" evidence="4">
    <location>
        <begin position="1046"/>
        <end position="1097"/>
    </location>
</feature>
<feature type="region of interest" description="Disordered" evidence="4">
    <location>
        <begin position="1194"/>
        <end position="1220"/>
    </location>
</feature>
<feature type="region of interest" description="Disordered" evidence="4">
    <location>
        <begin position="1271"/>
        <end position="1305"/>
    </location>
</feature>
<feature type="compositionally biased region" description="Low complexity" evidence="4">
    <location>
        <begin position="547"/>
        <end position="662"/>
    </location>
</feature>
<feature type="compositionally biased region" description="Low complexity" evidence="4">
    <location>
        <begin position="721"/>
        <end position="738"/>
    </location>
</feature>
<feature type="compositionally biased region" description="Low complexity" evidence="4">
    <location>
        <begin position="768"/>
        <end position="793"/>
    </location>
</feature>
<feature type="compositionally biased region" description="Low complexity" evidence="4">
    <location>
        <begin position="801"/>
        <end position="824"/>
    </location>
</feature>
<feature type="compositionally biased region" description="Low complexity" evidence="4">
    <location>
        <begin position="872"/>
        <end position="904"/>
    </location>
</feature>
<feature type="compositionally biased region" description="Polar residues" evidence="4">
    <location>
        <begin position="909"/>
        <end position="918"/>
    </location>
</feature>
<feature type="compositionally biased region" description="Low complexity" evidence="4">
    <location>
        <begin position="919"/>
        <end position="945"/>
    </location>
</feature>
<feature type="compositionally biased region" description="Polar residues" evidence="4">
    <location>
        <begin position="956"/>
        <end position="992"/>
    </location>
</feature>
<feature type="compositionally biased region" description="Low complexity" evidence="4">
    <location>
        <begin position="993"/>
        <end position="1002"/>
    </location>
</feature>
<feature type="compositionally biased region" description="Low complexity" evidence="4">
    <location>
        <begin position="1009"/>
        <end position="1030"/>
    </location>
</feature>
<feature type="compositionally biased region" description="Polar residues" evidence="4">
    <location>
        <begin position="1046"/>
        <end position="1062"/>
    </location>
</feature>
<feature type="compositionally biased region" description="Low complexity" evidence="4">
    <location>
        <begin position="1063"/>
        <end position="1077"/>
    </location>
</feature>
<feature type="compositionally biased region" description="Polar residues" evidence="4">
    <location>
        <begin position="1272"/>
        <end position="1286"/>
    </location>
</feature>
<feature type="compositionally biased region" description="Polar residues" evidence="4">
    <location>
        <begin position="1294"/>
        <end position="1303"/>
    </location>
</feature>
<feature type="lipid moiety-binding region" description="GPI-anchor amidated serine" evidence="2">
    <location>
        <position position="1548"/>
    </location>
</feature>
<feature type="glycosylation site" description="N-linked (GlcNAc...) asparagine" evidence="3">
    <location>
        <position position="559"/>
    </location>
</feature>
<feature type="glycosylation site" description="N-linked (GlcNAc...) asparagine" evidence="3">
    <location>
        <position position="851"/>
    </location>
</feature>
<feature type="glycosylation site" description="N-linked (GlcNAc...) asparagine" evidence="3">
    <location>
        <position position="988"/>
    </location>
</feature>
<feature type="glycosylation site" description="N-linked (GlcNAc...) asparagine" evidence="3">
    <location>
        <position position="1188"/>
    </location>
</feature>
<feature type="glycosylation site" description="N-linked (GlcNAc...) asparagine" evidence="3">
    <location>
        <position position="1284"/>
    </location>
</feature>
<feature type="disulfide bond" evidence="1">
    <location>
        <begin position="74"/>
        <end position="151"/>
    </location>
</feature>
<feature type="disulfide bond" evidence="1">
    <location>
        <begin position="97"/>
        <end position="113"/>
    </location>
</feature>
<feature type="disulfide bond" evidence="1">
    <location>
        <begin position="206"/>
        <end position="299"/>
    </location>
</feature>
<feature type="disulfide bond" evidence="1">
    <location>
        <begin position="228"/>
        <end position="257"/>
    </location>
</feature>
<feature type="sequence conflict" description="In Ref. 4; AAP51179." evidence="9" ref="4">
    <original>K</original>
    <variation>N</variation>
    <location>
        <position position="2"/>
    </location>
</feature>
<comment type="function">
    <text evidence="5 6 7 8">Cell surface adhesion protein which mediates both yeast-to-host tissue adherence and yeast aggregation. Plays an important role in the pathogenesis of C.albicans infections.</text>
</comment>
<comment type="subcellular location">
    <subcellularLocation>
        <location>Cell membrane</location>
        <topology>Lipid-anchor</topology>
        <topology>GPI-anchor</topology>
    </subcellularLocation>
    <subcellularLocation>
        <location>Secreted</location>
        <location>Cell wall</location>
    </subcellularLocation>
    <text>Identified as covalently-linked GPI-modified cell wall protein (GPI-CWP) in the outer cell wall layer.</text>
</comment>
<comment type="induction">
    <text evidence="5">Highly expressed in biofilms and during candidiasis infection dissemination.</text>
</comment>
<comment type="domain">
    <text evidence="6">Each ALS protein has a similar three-domain structure, including a N-ter domain of 433-436 amino acids that is 55-90 percent identical across the family and which mediates adherence to various materials; a central domain of variable numbers of tandemly repeated copies of a 36 amino acid motif; and a C-ter domain that is relatively variable in length and sequence across the family.</text>
</comment>
<comment type="PTM">
    <text>The GPI-anchor is attached to the protein in the endoplasmic reticulum and serves to target the protein to the cell surface. There, the glucosamine-inositol phospholipid moiety is cleaved off and the GPI-modified mannoprotein is covalently attached via its lipidless GPI glycan remnant to the 1,6-beta-glucan of the outer cell wall layer.</text>
</comment>
<comment type="miscellaneous">
    <text>ALS7 gene corresponds to a hypermutable contingency locus meaning that the diversity of ALS7 proteins provide C.albicans with a large and flexible repertoire of similar but non-identical surface proteins which may be important not only for adhesion but also for evasion of host defenses.</text>
</comment>
<comment type="similarity">
    <text evidence="9">Belongs to the ALS family.</text>
</comment>
<proteinExistence type="evidence at protein level"/>
<accession>Q5A312</accession>
<accession>A0A1D8PKF8</accession>
<accession>Q7Z9Z1</accession>
<protein>
    <recommendedName>
        <fullName>Agglutinin-like protein 7</fullName>
    </recommendedName>
    <alternativeName>
        <fullName>Adhesin 7</fullName>
    </alternativeName>
</protein>
<organism>
    <name type="scientific">Candida albicans (strain SC5314 / ATCC MYA-2876)</name>
    <name type="common">Yeast</name>
    <dbReference type="NCBI Taxonomy" id="237561"/>
    <lineage>
        <taxon>Eukaryota</taxon>
        <taxon>Fungi</taxon>
        <taxon>Dikarya</taxon>
        <taxon>Ascomycota</taxon>
        <taxon>Saccharomycotina</taxon>
        <taxon>Pichiomycetes</taxon>
        <taxon>Debaryomycetaceae</taxon>
        <taxon>Candida/Lodderomyces clade</taxon>
        <taxon>Candida</taxon>
    </lineage>
</organism>
<name>ALS7_CANAL</name>
<keyword id="KW-0130">Cell adhesion</keyword>
<keyword id="KW-1003">Cell membrane</keyword>
<keyword id="KW-0134">Cell wall</keyword>
<keyword id="KW-1015">Disulfide bond</keyword>
<keyword id="KW-0325">Glycoprotein</keyword>
<keyword id="KW-0336">GPI-anchor</keyword>
<keyword id="KW-0449">Lipoprotein</keyword>
<keyword id="KW-0472">Membrane</keyword>
<keyword id="KW-1185">Reference proteome</keyword>
<keyword id="KW-0677">Repeat</keyword>
<keyword id="KW-0964">Secreted</keyword>
<keyword id="KW-0732">Signal</keyword>
<keyword id="KW-0843">Virulence</keyword>
<reference key="1">
    <citation type="journal article" date="2004" name="Proc. Natl. Acad. Sci. U.S.A.">
        <title>The diploid genome sequence of Candida albicans.</title>
        <authorList>
            <person name="Jones T."/>
            <person name="Federspiel N.A."/>
            <person name="Chibana H."/>
            <person name="Dungan J."/>
            <person name="Kalman S."/>
            <person name="Magee B.B."/>
            <person name="Newport G."/>
            <person name="Thorstenson Y.R."/>
            <person name="Agabian N."/>
            <person name="Magee P.T."/>
            <person name="Davis R.W."/>
            <person name="Scherer S."/>
        </authorList>
    </citation>
    <scope>NUCLEOTIDE SEQUENCE [LARGE SCALE GENOMIC DNA]</scope>
    <source>
        <strain>SC5314 / ATCC MYA-2876</strain>
    </source>
</reference>
<reference key="2">
    <citation type="journal article" date="2007" name="Genome Biol.">
        <title>Assembly of the Candida albicans genome into sixteen supercontigs aligned on the eight chromosomes.</title>
        <authorList>
            <person name="van het Hoog M."/>
            <person name="Rast T.J."/>
            <person name="Martchenko M."/>
            <person name="Grindle S."/>
            <person name="Dignard D."/>
            <person name="Hogues H."/>
            <person name="Cuomo C."/>
            <person name="Berriman M."/>
            <person name="Scherer S."/>
            <person name="Magee B.B."/>
            <person name="Whiteway M."/>
            <person name="Chibana H."/>
            <person name="Nantel A."/>
            <person name="Magee P.T."/>
        </authorList>
    </citation>
    <scope>GENOME REANNOTATION</scope>
    <source>
        <strain>SC5314 / ATCC MYA-2876</strain>
    </source>
</reference>
<reference key="3">
    <citation type="journal article" date="2013" name="Genome Biol.">
        <title>Assembly of a phased diploid Candida albicans genome facilitates allele-specific measurements and provides a simple model for repeat and indel structure.</title>
        <authorList>
            <person name="Muzzey D."/>
            <person name="Schwartz K."/>
            <person name="Weissman J.S."/>
            <person name="Sherlock G."/>
        </authorList>
    </citation>
    <scope>NUCLEOTIDE SEQUENCE [LARGE SCALE GENOMIC DNA]</scope>
    <scope>GENOME REANNOTATION</scope>
    <source>
        <strain>SC5314 / ATCC MYA-2876</strain>
    </source>
</reference>
<reference key="4">
    <citation type="journal article" date="2003" name="Microbiology">
        <title>Allelic variation in the contiguous loci encoding Candida albicans ALS5, ALS1 and ALS9.</title>
        <authorList>
            <person name="Zhao X."/>
            <person name="Pujol C."/>
            <person name="Soll D.R."/>
            <person name="Hoyer L.L."/>
        </authorList>
    </citation>
    <scope>NUCLEOTIDE SEQUENCE [GENOMIC DNA] OF 1-471</scope>
    <source>
        <strain>SC5314 / ATCC MYA-2876</strain>
    </source>
</reference>
<reference key="5">
    <citation type="journal article" date="2003" name="Genome Res.">
        <title>Sixty alleles of the ALS7 open reading frame in Candida albicans: ALS7 is a hypermutable contingency locus.</title>
        <authorList>
            <person name="Zhang N."/>
            <person name="Harrex A.L."/>
            <person name="Holland B.R."/>
            <person name="Fenton L.E."/>
            <person name="Cannon R.D."/>
            <person name="Schmid J."/>
        </authorList>
    </citation>
    <scope>INDUCTION</scope>
    <scope>FUNCTION</scope>
</reference>
<reference key="6">
    <citation type="journal article" date="2003" name="Yeast">
        <title>Genome-wide identification of fungal GPI proteins.</title>
        <authorList>
            <person name="De Groot P.W."/>
            <person name="Hellingwerf K.J."/>
            <person name="Klis F.M."/>
        </authorList>
    </citation>
    <scope>PREDICTION OF GPI-ANCHOR</scope>
</reference>
<reference key="7">
    <citation type="journal article" date="2004" name="J. Biol. Chem.">
        <title>Functional and structural diversity in the Als protein family of Candida albicans.</title>
        <authorList>
            <person name="Sheppard D.C."/>
            <person name="Yeaman M.R."/>
            <person name="Welch W.H."/>
            <person name="Phan Q.T."/>
            <person name="Fu Y."/>
            <person name="Ibrahim A.S."/>
            <person name="Filler S.G."/>
            <person name="Zhang M."/>
            <person name="Waring A.J."/>
            <person name="Edwards J.E. Jr."/>
        </authorList>
    </citation>
    <scope>FUNCTION</scope>
    <scope>DOMAIN</scope>
</reference>
<reference key="8">
    <citation type="journal article" date="2012" name="FEMS Immunol. Med. Microbiol.">
        <title>Profiling of adhesive properties of the agglutinin-like sequence (ALS) protein family, a virulent attribute of Candida albicans.</title>
        <authorList>
            <person name="Aoki W."/>
            <person name="Kitahara N."/>
            <person name="Miura N."/>
            <person name="Morisaka H."/>
            <person name="Kuroda K."/>
            <person name="Ueda M."/>
        </authorList>
    </citation>
    <scope>FUNCTION</scope>
</reference>
<reference key="9">
    <citation type="journal article" date="2012" name="Mycoses">
        <title>Frequency and expression of ALS and HWP1 genotypes in Candida albicans strains isolated from Mexican patients suffering from vaginal candidosis.</title>
        <authorList>
            <person name="Monroy-Perez E."/>
            <person name="Sainz-Espunes T."/>
            <person name="Paniagua-Contreras G."/>
            <person name="Negrete-Abascal E."/>
            <person name="Rodriguez-Moctezuma J.R."/>
            <person name="Vaca S."/>
        </authorList>
    </citation>
    <scope>FUNCTION</scope>
</reference>
<dbReference type="EMBL" id="CP017625">
    <property type="protein sequence ID" value="AOW28639.1"/>
    <property type="molecule type" value="Genomic_DNA"/>
</dbReference>
<dbReference type="EMBL" id="AY296650">
    <property type="protein sequence ID" value="AAP51179.1"/>
    <property type="molecule type" value="Genomic_DNA"/>
</dbReference>
<dbReference type="RefSeq" id="XP_716065.2">
    <property type="nucleotide sequence ID" value="XM_710972.2"/>
</dbReference>
<dbReference type="SMR" id="Q5A312"/>
<dbReference type="BioGRID" id="1225328">
    <property type="interactions" value="9"/>
</dbReference>
<dbReference type="STRING" id="237561.Q5A312"/>
<dbReference type="GlyCosmos" id="Q5A312">
    <property type="glycosylation" value="5 sites, No reported glycans"/>
</dbReference>
<dbReference type="EnsemblFungi" id="C3_06320W_A-T">
    <property type="protein sequence ID" value="C3_06320W_A-T-p1"/>
    <property type="gene ID" value="C3_06320W_A"/>
</dbReference>
<dbReference type="GeneID" id="3642234"/>
<dbReference type="KEGG" id="cal:CAALFM_C306320WA"/>
<dbReference type="CGD" id="CAL0000197652">
    <property type="gene designation" value="ALS7"/>
</dbReference>
<dbReference type="VEuPathDB" id="FungiDB:C3_06320W_A"/>
<dbReference type="eggNOG" id="ENOG502RGCG">
    <property type="taxonomic scope" value="Eukaryota"/>
</dbReference>
<dbReference type="HOGENOM" id="CLU_001779_0_0_1"/>
<dbReference type="InParanoid" id="Q5A312"/>
<dbReference type="OrthoDB" id="3981162at2759"/>
<dbReference type="PHI-base" id="PHI:11393"/>
<dbReference type="Proteomes" id="UP000000559">
    <property type="component" value="Chromosome 3"/>
</dbReference>
<dbReference type="GO" id="GO:0009986">
    <property type="term" value="C:cell surface"/>
    <property type="evidence" value="ECO:0000318"/>
    <property type="project" value="GO_Central"/>
</dbReference>
<dbReference type="GO" id="GO:1903561">
    <property type="term" value="C:extracellular vesicle"/>
    <property type="evidence" value="ECO:0000318"/>
    <property type="project" value="GO_Central"/>
</dbReference>
<dbReference type="GO" id="GO:0030446">
    <property type="term" value="C:hyphal cell wall"/>
    <property type="evidence" value="ECO:0000318"/>
    <property type="project" value="GO_Central"/>
</dbReference>
<dbReference type="GO" id="GO:0005886">
    <property type="term" value="C:plasma membrane"/>
    <property type="evidence" value="ECO:0007669"/>
    <property type="project" value="UniProtKB-SubCell"/>
</dbReference>
<dbReference type="GO" id="GO:0098552">
    <property type="term" value="C:side of membrane"/>
    <property type="evidence" value="ECO:0007669"/>
    <property type="project" value="UniProtKB-KW"/>
</dbReference>
<dbReference type="GO" id="GO:0030445">
    <property type="term" value="C:yeast-form cell wall"/>
    <property type="evidence" value="ECO:0000318"/>
    <property type="project" value="GO_Central"/>
</dbReference>
<dbReference type="GO" id="GO:0043710">
    <property type="term" value="P:cell adhesion involved in multi-species biofilm formation"/>
    <property type="evidence" value="ECO:0000315"/>
    <property type="project" value="CGD"/>
</dbReference>
<dbReference type="GO" id="GO:0043709">
    <property type="term" value="P:cell adhesion involved in single-species biofilm formation"/>
    <property type="evidence" value="ECO:0000315"/>
    <property type="project" value="CGD"/>
</dbReference>
<dbReference type="GO" id="GO:0098609">
    <property type="term" value="P:cell-cell adhesion"/>
    <property type="evidence" value="ECO:0000318"/>
    <property type="project" value="GO_Central"/>
</dbReference>
<dbReference type="GO" id="GO:0030448">
    <property type="term" value="P:hyphal growth"/>
    <property type="evidence" value="ECO:0000318"/>
    <property type="project" value="GO_Central"/>
</dbReference>
<dbReference type="GO" id="GO:0044011">
    <property type="term" value="P:single-species biofilm formation on inanimate substrate"/>
    <property type="evidence" value="ECO:0000318"/>
    <property type="project" value="GO_Central"/>
</dbReference>
<dbReference type="FunFam" id="2.60.40.1280:FF:000001">
    <property type="entry name" value="Agglutinin-like protein 3"/>
    <property type="match status" value="1"/>
</dbReference>
<dbReference type="Gene3D" id="2.60.40.1280">
    <property type="match status" value="1"/>
</dbReference>
<dbReference type="Gene3D" id="2.60.40.2430">
    <property type="entry name" value="Agglutinin-like protein, N-terminal domain, N2 subdomain"/>
    <property type="match status" value="1"/>
</dbReference>
<dbReference type="InterPro" id="IPR008966">
    <property type="entry name" value="Adhesion_dom_sf"/>
</dbReference>
<dbReference type="InterPro" id="IPR008440">
    <property type="entry name" value="Agglutinin-like_ALS_rpt"/>
</dbReference>
<dbReference type="InterPro" id="IPR024672">
    <property type="entry name" value="Agglutinin-like_N"/>
</dbReference>
<dbReference type="InterPro" id="IPR043063">
    <property type="entry name" value="Agglutinin-like_N_N2"/>
</dbReference>
<dbReference type="InterPro" id="IPR033504">
    <property type="entry name" value="ALS"/>
</dbReference>
<dbReference type="InterPro" id="IPR011252">
    <property type="entry name" value="Fibrogen-bd_dom1"/>
</dbReference>
<dbReference type="PANTHER" id="PTHR33793:SF2">
    <property type="entry name" value="AGGLUTININ-LIKE PROTEIN 6"/>
    <property type="match status" value="1"/>
</dbReference>
<dbReference type="PANTHER" id="PTHR33793">
    <property type="entry name" value="ALPHA-AGGLUTININ"/>
    <property type="match status" value="1"/>
</dbReference>
<dbReference type="Pfam" id="PF05792">
    <property type="entry name" value="Candida_ALS"/>
    <property type="match status" value="4"/>
</dbReference>
<dbReference type="Pfam" id="PF11766">
    <property type="entry name" value="Candida_ALS_N"/>
    <property type="match status" value="1"/>
</dbReference>
<dbReference type="SMART" id="SM01056">
    <property type="entry name" value="Candida_ALS_N"/>
    <property type="match status" value="1"/>
</dbReference>
<dbReference type="SUPFAM" id="SSF49401">
    <property type="entry name" value="Bacterial adhesins"/>
    <property type="match status" value="1"/>
</dbReference>
<gene>
    <name type="primary">ALS7</name>
    <name type="synonym">ALS94</name>
    <name type="synonym">ALS95</name>
    <name type="synonym">ALS96</name>
    <name type="synonym">ALS98</name>
    <name type="ordered locus">CAALFM_C306320WA</name>
    <name type="ORF">CaO19.7400</name>
</gene>